<sequence>MKKASIISVGAYIPKDILTNFDLEKMVDTSDEWIVKRTGIKTRHLAKNEVTSDLAYKAALMAIQRAGIDKNDIDAVICATITPDYFCMPSTACKVASNLGLFDVTAFDISAACTGFIYLLEIAKSLVESGAKKNVLIIGAEKLSSIINWQDRSTCVLFGDGAGAAIVSSSDDNYIIDVHTSSDGSKGNLLITPGCGIVHPANKDTIDKKLNFLHMSGNEVFKIAVNTLAKDVVDILEKNSVSSKDIDLFIPHQANLRIIEAVKQRLDFTDEQCVVTVVDYGNTSSASIPMAMNDAYEDGRLKQGSLILLDAFGGGFTWGSALLRFGGK</sequence>
<reference key="1">
    <citation type="submission" date="2006-11" db="EMBL/GenBank/DDBJ databases">
        <title>Sequence of Campylobacter fetus subsp. fetus 82-40.</title>
        <authorList>
            <person name="Fouts D.E."/>
            <person name="Nelson K.E."/>
        </authorList>
    </citation>
    <scope>NUCLEOTIDE SEQUENCE [LARGE SCALE GENOMIC DNA]</scope>
    <source>
        <strain>82-40</strain>
    </source>
</reference>
<evidence type="ECO:0000255" key="1">
    <source>
        <dbReference type="HAMAP-Rule" id="MF_01815"/>
    </source>
</evidence>
<dbReference type="EC" id="2.3.1.180" evidence="1"/>
<dbReference type="EMBL" id="CP000487">
    <property type="protein sequence ID" value="ABK82247.1"/>
    <property type="molecule type" value="Genomic_DNA"/>
</dbReference>
<dbReference type="RefSeq" id="WP_002848291.1">
    <property type="nucleotide sequence ID" value="NC_008599.1"/>
</dbReference>
<dbReference type="SMR" id="A0RMK8"/>
<dbReference type="KEGG" id="cff:CFF8240_0237"/>
<dbReference type="eggNOG" id="COG0332">
    <property type="taxonomic scope" value="Bacteria"/>
</dbReference>
<dbReference type="HOGENOM" id="CLU_039592_3_1_7"/>
<dbReference type="UniPathway" id="UPA00094"/>
<dbReference type="Proteomes" id="UP000000760">
    <property type="component" value="Chromosome"/>
</dbReference>
<dbReference type="GO" id="GO:0005737">
    <property type="term" value="C:cytoplasm"/>
    <property type="evidence" value="ECO:0007669"/>
    <property type="project" value="UniProtKB-SubCell"/>
</dbReference>
<dbReference type="GO" id="GO:0004315">
    <property type="term" value="F:3-oxoacyl-[acyl-carrier-protein] synthase activity"/>
    <property type="evidence" value="ECO:0007669"/>
    <property type="project" value="InterPro"/>
</dbReference>
<dbReference type="GO" id="GO:0033818">
    <property type="term" value="F:beta-ketoacyl-acyl-carrier-protein synthase III activity"/>
    <property type="evidence" value="ECO:0007669"/>
    <property type="project" value="UniProtKB-UniRule"/>
</dbReference>
<dbReference type="GO" id="GO:0006633">
    <property type="term" value="P:fatty acid biosynthetic process"/>
    <property type="evidence" value="ECO:0007669"/>
    <property type="project" value="UniProtKB-UniRule"/>
</dbReference>
<dbReference type="GO" id="GO:0044550">
    <property type="term" value="P:secondary metabolite biosynthetic process"/>
    <property type="evidence" value="ECO:0007669"/>
    <property type="project" value="TreeGrafter"/>
</dbReference>
<dbReference type="CDD" id="cd00830">
    <property type="entry name" value="KAS_III"/>
    <property type="match status" value="1"/>
</dbReference>
<dbReference type="FunFam" id="3.40.47.10:FF:000004">
    <property type="entry name" value="3-oxoacyl-[acyl-carrier-protein] synthase 3"/>
    <property type="match status" value="1"/>
</dbReference>
<dbReference type="Gene3D" id="3.40.47.10">
    <property type="match status" value="1"/>
</dbReference>
<dbReference type="HAMAP" id="MF_01815">
    <property type="entry name" value="FabH"/>
    <property type="match status" value="1"/>
</dbReference>
<dbReference type="InterPro" id="IPR013747">
    <property type="entry name" value="ACP_syn_III_C"/>
</dbReference>
<dbReference type="InterPro" id="IPR013751">
    <property type="entry name" value="ACP_syn_III_N"/>
</dbReference>
<dbReference type="InterPro" id="IPR004655">
    <property type="entry name" value="FabH"/>
</dbReference>
<dbReference type="InterPro" id="IPR016039">
    <property type="entry name" value="Thiolase-like"/>
</dbReference>
<dbReference type="NCBIfam" id="TIGR00747">
    <property type="entry name" value="fabH"/>
    <property type="match status" value="1"/>
</dbReference>
<dbReference type="NCBIfam" id="NF006829">
    <property type="entry name" value="PRK09352.1"/>
    <property type="match status" value="1"/>
</dbReference>
<dbReference type="PANTHER" id="PTHR34069">
    <property type="entry name" value="3-OXOACYL-[ACYL-CARRIER-PROTEIN] SYNTHASE 3"/>
    <property type="match status" value="1"/>
</dbReference>
<dbReference type="PANTHER" id="PTHR34069:SF2">
    <property type="entry name" value="BETA-KETOACYL-[ACYL-CARRIER-PROTEIN] SYNTHASE III"/>
    <property type="match status" value="1"/>
</dbReference>
<dbReference type="Pfam" id="PF08545">
    <property type="entry name" value="ACP_syn_III"/>
    <property type="match status" value="1"/>
</dbReference>
<dbReference type="Pfam" id="PF08541">
    <property type="entry name" value="ACP_syn_III_C"/>
    <property type="match status" value="1"/>
</dbReference>
<dbReference type="SUPFAM" id="SSF53901">
    <property type="entry name" value="Thiolase-like"/>
    <property type="match status" value="1"/>
</dbReference>
<protein>
    <recommendedName>
        <fullName evidence="1">Beta-ketoacyl-[acyl-carrier-protein] synthase III</fullName>
        <shortName evidence="1">Beta-ketoacyl-ACP synthase III</shortName>
        <shortName evidence="1">KAS III</shortName>
        <ecNumber evidence="1">2.3.1.180</ecNumber>
    </recommendedName>
    <alternativeName>
        <fullName evidence="1">3-oxoacyl-[acyl-carrier-protein] synthase 3</fullName>
    </alternativeName>
    <alternativeName>
        <fullName evidence="1">3-oxoacyl-[acyl-carrier-protein] synthase III</fullName>
    </alternativeName>
</protein>
<feature type="chain" id="PRO_1000056334" description="Beta-ketoacyl-[acyl-carrier-protein] synthase III">
    <location>
        <begin position="1"/>
        <end position="328"/>
    </location>
</feature>
<feature type="region of interest" description="ACP-binding" evidence="1">
    <location>
        <begin position="253"/>
        <end position="257"/>
    </location>
</feature>
<feature type="active site" evidence="1">
    <location>
        <position position="113"/>
    </location>
</feature>
<feature type="active site" evidence="1">
    <location>
        <position position="252"/>
    </location>
</feature>
<feature type="active site" evidence="1">
    <location>
        <position position="282"/>
    </location>
</feature>
<comment type="function">
    <text evidence="1">Catalyzes the condensation reaction of fatty acid synthesis by the addition to an acyl acceptor of two carbons from malonyl-ACP. Catalyzes the first condensation reaction which initiates fatty acid synthesis and may therefore play a role in governing the total rate of fatty acid production. Possesses both acetoacetyl-ACP synthase and acetyl transacylase activities. Its substrate specificity determines the biosynthesis of branched-chain and/or straight-chain of fatty acids.</text>
</comment>
<comment type="catalytic activity">
    <reaction evidence="1">
        <text>malonyl-[ACP] + acetyl-CoA + H(+) = 3-oxobutanoyl-[ACP] + CO2 + CoA</text>
        <dbReference type="Rhea" id="RHEA:12080"/>
        <dbReference type="Rhea" id="RHEA-COMP:9623"/>
        <dbReference type="Rhea" id="RHEA-COMP:9625"/>
        <dbReference type="ChEBI" id="CHEBI:15378"/>
        <dbReference type="ChEBI" id="CHEBI:16526"/>
        <dbReference type="ChEBI" id="CHEBI:57287"/>
        <dbReference type="ChEBI" id="CHEBI:57288"/>
        <dbReference type="ChEBI" id="CHEBI:78449"/>
        <dbReference type="ChEBI" id="CHEBI:78450"/>
        <dbReference type="EC" id="2.3.1.180"/>
    </reaction>
</comment>
<comment type="pathway">
    <text evidence="1">Lipid metabolism; fatty acid biosynthesis.</text>
</comment>
<comment type="subunit">
    <text evidence="1">Homodimer.</text>
</comment>
<comment type="subcellular location">
    <subcellularLocation>
        <location evidence="1">Cytoplasm</location>
    </subcellularLocation>
</comment>
<comment type="domain">
    <text evidence="1">The last Arg residue of the ACP-binding site is essential for the weak association between ACP/AcpP and FabH.</text>
</comment>
<comment type="similarity">
    <text evidence="1">Belongs to the thiolase-like superfamily. FabH family.</text>
</comment>
<keyword id="KW-0012">Acyltransferase</keyword>
<keyword id="KW-0963">Cytoplasm</keyword>
<keyword id="KW-0275">Fatty acid biosynthesis</keyword>
<keyword id="KW-0276">Fatty acid metabolism</keyword>
<keyword id="KW-0444">Lipid biosynthesis</keyword>
<keyword id="KW-0443">Lipid metabolism</keyword>
<keyword id="KW-0511">Multifunctional enzyme</keyword>
<keyword id="KW-0808">Transferase</keyword>
<name>FABH_CAMFF</name>
<gene>
    <name evidence="1" type="primary">fabH</name>
    <name type="ordered locus">CFF8240_0237</name>
</gene>
<proteinExistence type="inferred from homology"/>
<organism>
    <name type="scientific">Campylobacter fetus subsp. fetus (strain 82-40)</name>
    <dbReference type="NCBI Taxonomy" id="360106"/>
    <lineage>
        <taxon>Bacteria</taxon>
        <taxon>Pseudomonadati</taxon>
        <taxon>Campylobacterota</taxon>
        <taxon>Epsilonproteobacteria</taxon>
        <taxon>Campylobacterales</taxon>
        <taxon>Campylobacteraceae</taxon>
        <taxon>Campylobacter</taxon>
    </lineage>
</organism>
<accession>A0RMK8</accession>